<sequence length="152" mass="16580">MTCTDQKSHSQRALGTQTPALQGPQLLNTDPSSEETRPPHVNPDRLCHMEPANHFWHAGDLQAMISKEFHLAATQDDCRKGRTQEDILVPSSHPELFASVLPMAPEEAARLQQPQPLPPPSGIHLSASRTLAPTLLYSSPPSHSPFGLSSLI</sequence>
<accession>Q9UIG5</accession>
<accession>B0V083</accession>
<accession>Q5ST21</accession>
<accession>Q86WJ8</accession>
<accession>Q86WJ9</accession>
<accession>Q96QC3</accession>
<evidence type="ECO:0000256" key="1">
    <source>
        <dbReference type="SAM" id="MobiDB-lite"/>
    </source>
</evidence>
<evidence type="ECO:0000269" key="2">
    <source>
    </source>
</evidence>
<evidence type="ECO:0000269" key="3">
    <source>
    </source>
</evidence>
<evidence type="ECO:0000303" key="4">
    <source>
    </source>
</evidence>
<evidence type="ECO:0000305" key="5"/>
<reference key="1">
    <citation type="journal article" date="1999" name="Hum. Mol. Genet.">
        <title>Association analysis using refined microsatellite markers localizes a susceptibility locus for psoriasis vulgaris within a 111kb segment telomeric to the HLA-C gene.</title>
        <authorList>
            <person name="Oka A."/>
            <person name="Tamiya G."/>
            <person name="Tomizawa M."/>
            <person name="Ota M."/>
            <person name="Katsuyama Y."/>
            <person name="Makino S."/>
            <person name="Shiina T."/>
            <person name="Yoshitome M."/>
            <person name="Lizuka M."/>
            <person name="Sasao Y."/>
            <person name="Iwashita K."/>
            <person name="Kawakubo Y."/>
            <person name="Sugai J."/>
            <person name="Ozawa A."/>
            <person name="Ohkido M."/>
            <person name="Kimura M."/>
            <person name="Bahram S."/>
            <person name="Inoko H."/>
        </authorList>
    </citation>
    <scope>NUCLEOTIDE SEQUENCE [MRNA] (ISOFORM 1)</scope>
    <scope>VARIANT LYS-34</scope>
</reference>
<reference key="2">
    <citation type="journal article" date="2003" name="Exp. Dermatol.">
        <title>Polymorphisms in the SEEK1 and SPR1 genes on 6p21.3 associate with psoriasis in the Swedish population.</title>
        <authorList>
            <person name="Holm S.J."/>
            <person name="Carlen L.M."/>
            <person name="Mallbris L."/>
            <person name="Staehle-Baeckdahl M."/>
            <person name="O'Brien K.P."/>
        </authorList>
    </citation>
    <scope>NUCLEOTIDE SEQUENCE [MRNA] (ISOFORMS 1 AND 2)</scope>
    <scope>TISSUE SPECIFICITY</scope>
    <scope>VARIANTS THR-24; GLN-34; LYS-34; HIS-37 AND LEU-133</scope>
    <source>
        <tissue>Colon</tissue>
        <tissue>Skin</tissue>
    </source>
</reference>
<reference key="3">
    <citation type="submission" date="1999-09" db="EMBL/GenBank/DDBJ databases">
        <title>Homo sapiens 2,229,817bp genomic DNA of 6p21.3 HLA class I region.</title>
        <authorList>
            <person name="Shiina S."/>
            <person name="Tamiya G."/>
            <person name="Oka A."/>
            <person name="Inoko H."/>
        </authorList>
    </citation>
    <scope>NUCLEOTIDE SEQUENCE [LARGE SCALE GENOMIC DNA]</scope>
</reference>
<reference key="4">
    <citation type="submission" date="2002-07" db="EMBL/GenBank/DDBJ databases">
        <title>Genome diversity in HLA: a new strategy for detection of genetic polymorphisms in expressed genes within the HLA class III and class I regions.</title>
        <authorList>
            <person name="Shiina T."/>
            <person name="Ota M."/>
            <person name="Katsuyama Y."/>
            <person name="Hashimoto N."/>
            <person name="Inoko H."/>
        </authorList>
    </citation>
    <scope>NUCLEOTIDE SEQUENCE [LARGE SCALE GENOMIC DNA]</scope>
</reference>
<reference key="5">
    <citation type="journal article" date="2003" name="Nature">
        <title>The DNA sequence and analysis of human chromosome 6.</title>
        <authorList>
            <person name="Mungall A.J."/>
            <person name="Palmer S.A."/>
            <person name="Sims S.K."/>
            <person name="Edwards C.A."/>
            <person name="Ashurst J.L."/>
            <person name="Wilming L."/>
            <person name="Jones M.C."/>
            <person name="Horton R."/>
            <person name="Hunt S.E."/>
            <person name="Scott C.E."/>
            <person name="Gilbert J.G.R."/>
            <person name="Clamp M.E."/>
            <person name="Bethel G."/>
            <person name="Milne S."/>
            <person name="Ainscough R."/>
            <person name="Almeida J.P."/>
            <person name="Ambrose K.D."/>
            <person name="Andrews T.D."/>
            <person name="Ashwell R.I.S."/>
            <person name="Babbage A.K."/>
            <person name="Bagguley C.L."/>
            <person name="Bailey J."/>
            <person name="Banerjee R."/>
            <person name="Barker D.J."/>
            <person name="Barlow K.F."/>
            <person name="Bates K."/>
            <person name="Beare D.M."/>
            <person name="Beasley H."/>
            <person name="Beasley O."/>
            <person name="Bird C.P."/>
            <person name="Blakey S.E."/>
            <person name="Bray-Allen S."/>
            <person name="Brook J."/>
            <person name="Brown A.J."/>
            <person name="Brown J.Y."/>
            <person name="Burford D.C."/>
            <person name="Burrill W."/>
            <person name="Burton J."/>
            <person name="Carder C."/>
            <person name="Carter N.P."/>
            <person name="Chapman J.C."/>
            <person name="Clark S.Y."/>
            <person name="Clark G."/>
            <person name="Clee C.M."/>
            <person name="Clegg S."/>
            <person name="Cobley V."/>
            <person name="Collier R.E."/>
            <person name="Collins J.E."/>
            <person name="Colman L.K."/>
            <person name="Corby N.R."/>
            <person name="Coville G.J."/>
            <person name="Culley K.M."/>
            <person name="Dhami P."/>
            <person name="Davies J."/>
            <person name="Dunn M."/>
            <person name="Earthrowl M.E."/>
            <person name="Ellington A.E."/>
            <person name="Evans K.A."/>
            <person name="Faulkner L."/>
            <person name="Francis M.D."/>
            <person name="Frankish A."/>
            <person name="Frankland J."/>
            <person name="French L."/>
            <person name="Garner P."/>
            <person name="Garnett J."/>
            <person name="Ghori M.J."/>
            <person name="Gilby L.M."/>
            <person name="Gillson C.J."/>
            <person name="Glithero R.J."/>
            <person name="Grafham D.V."/>
            <person name="Grant M."/>
            <person name="Gribble S."/>
            <person name="Griffiths C."/>
            <person name="Griffiths M.N.D."/>
            <person name="Hall R."/>
            <person name="Halls K.S."/>
            <person name="Hammond S."/>
            <person name="Harley J.L."/>
            <person name="Hart E.A."/>
            <person name="Heath P.D."/>
            <person name="Heathcott R."/>
            <person name="Holmes S.J."/>
            <person name="Howden P.J."/>
            <person name="Howe K.L."/>
            <person name="Howell G.R."/>
            <person name="Huckle E."/>
            <person name="Humphray S.J."/>
            <person name="Humphries M.D."/>
            <person name="Hunt A.R."/>
            <person name="Johnson C.M."/>
            <person name="Joy A.A."/>
            <person name="Kay M."/>
            <person name="Keenan S.J."/>
            <person name="Kimberley A.M."/>
            <person name="King A."/>
            <person name="Laird G.K."/>
            <person name="Langford C."/>
            <person name="Lawlor S."/>
            <person name="Leongamornlert D.A."/>
            <person name="Leversha M."/>
            <person name="Lloyd C.R."/>
            <person name="Lloyd D.M."/>
            <person name="Loveland J.E."/>
            <person name="Lovell J."/>
            <person name="Martin S."/>
            <person name="Mashreghi-Mohammadi M."/>
            <person name="Maslen G.L."/>
            <person name="Matthews L."/>
            <person name="McCann O.T."/>
            <person name="McLaren S.J."/>
            <person name="McLay K."/>
            <person name="McMurray A."/>
            <person name="Moore M.J.F."/>
            <person name="Mullikin J.C."/>
            <person name="Niblett D."/>
            <person name="Nickerson T."/>
            <person name="Novik K.L."/>
            <person name="Oliver K."/>
            <person name="Overton-Larty E.K."/>
            <person name="Parker A."/>
            <person name="Patel R."/>
            <person name="Pearce A.V."/>
            <person name="Peck A.I."/>
            <person name="Phillimore B.J.C.T."/>
            <person name="Phillips S."/>
            <person name="Plumb R.W."/>
            <person name="Porter K.M."/>
            <person name="Ramsey Y."/>
            <person name="Ranby S.A."/>
            <person name="Rice C.M."/>
            <person name="Ross M.T."/>
            <person name="Searle S.M."/>
            <person name="Sehra H.K."/>
            <person name="Sheridan E."/>
            <person name="Skuce C.D."/>
            <person name="Smith S."/>
            <person name="Smith M."/>
            <person name="Spraggon L."/>
            <person name="Squares S.L."/>
            <person name="Steward C.A."/>
            <person name="Sycamore N."/>
            <person name="Tamlyn-Hall G."/>
            <person name="Tester J."/>
            <person name="Theaker A.J."/>
            <person name="Thomas D.W."/>
            <person name="Thorpe A."/>
            <person name="Tracey A."/>
            <person name="Tromans A."/>
            <person name="Tubby B."/>
            <person name="Wall M."/>
            <person name="Wallis J.M."/>
            <person name="West A.P."/>
            <person name="White S.S."/>
            <person name="Whitehead S.L."/>
            <person name="Whittaker H."/>
            <person name="Wild A."/>
            <person name="Willey D.J."/>
            <person name="Wilmer T.E."/>
            <person name="Wood J.M."/>
            <person name="Wray P.W."/>
            <person name="Wyatt J.C."/>
            <person name="Young L."/>
            <person name="Younger R.M."/>
            <person name="Bentley D.R."/>
            <person name="Coulson A."/>
            <person name="Durbin R.M."/>
            <person name="Hubbard T."/>
            <person name="Sulston J.E."/>
            <person name="Dunham I."/>
            <person name="Rogers J."/>
            <person name="Beck S."/>
        </authorList>
    </citation>
    <scope>NUCLEOTIDE SEQUENCE [LARGE SCALE GENOMIC DNA]</scope>
</reference>
<reference key="6">
    <citation type="submission" date="2005-07" db="EMBL/GenBank/DDBJ databases">
        <authorList>
            <person name="Mural R.J."/>
            <person name="Istrail S."/>
            <person name="Sutton G.G."/>
            <person name="Florea L."/>
            <person name="Halpern A.L."/>
            <person name="Mobarry C.M."/>
            <person name="Lippert R."/>
            <person name="Walenz B."/>
            <person name="Shatkay H."/>
            <person name="Dew I."/>
            <person name="Miller J.R."/>
            <person name="Flanigan M.J."/>
            <person name="Edwards N.J."/>
            <person name="Bolanos R."/>
            <person name="Fasulo D."/>
            <person name="Halldorsson B.V."/>
            <person name="Hannenhalli S."/>
            <person name="Turner R."/>
            <person name="Yooseph S."/>
            <person name="Lu F."/>
            <person name="Nusskern D.R."/>
            <person name="Shue B.C."/>
            <person name="Zheng X.H."/>
            <person name="Zhong F."/>
            <person name="Delcher A.L."/>
            <person name="Huson D.H."/>
            <person name="Kravitz S.A."/>
            <person name="Mouchard L."/>
            <person name="Reinert K."/>
            <person name="Remington K.A."/>
            <person name="Clark A.G."/>
            <person name="Waterman M.S."/>
            <person name="Eichler E.E."/>
            <person name="Adams M.D."/>
            <person name="Hunkapiller M.W."/>
            <person name="Myers E.W."/>
            <person name="Venter J.C."/>
        </authorList>
    </citation>
    <scope>NUCLEOTIDE SEQUENCE [LARGE SCALE GENOMIC DNA]</scope>
</reference>
<dbReference type="EMBL" id="AB031479">
    <property type="protein sequence ID" value="BAA88130.1"/>
    <property type="molecule type" value="mRNA"/>
</dbReference>
<dbReference type="EMBL" id="AF484418">
    <property type="protein sequence ID" value="AAO49375.1"/>
    <property type="molecule type" value="mRNA"/>
</dbReference>
<dbReference type="EMBL" id="AF484419">
    <property type="protein sequence ID" value="AAO49376.1"/>
    <property type="molecule type" value="mRNA"/>
</dbReference>
<dbReference type="EMBL" id="BA000025">
    <property type="protein sequence ID" value="BAB63314.1"/>
    <property type="status" value="ALT_SEQ"/>
    <property type="molecule type" value="Genomic_DNA"/>
</dbReference>
<dbReference type="EMBL" id="AB088114">
    <property type="protein sequence ID" value="BAC54950.1"/>
    <property type="status" value="ALT_SEQ"/>
    <property type="molecule type" value="Genomic_DNA"/>
</dbReference>
<dbReference type="EMBL" id="AL662844">
    <property type="status" value="NOT_ANNOTATED_CDS"/>
    <property type="molecule type" value="Genomic_DNA"/>
</dbReference>
<dbReference type="EMBL" id="AL662867">
    <property type="status" value="NOT_ANNOTATED_CDS"/>
    <property type="molecule type" value="Genomic_DNA"/>
</dbReference>
<dbReference type="EMBL" id="BX927139">
    <property type="status" value="NOT_ANNOTATED_CDS"/>
    <property type="molecule type" value="Genomic_DNA"/>
</dbReference>
<dbReference type="EMBL" id="CR753819">
    <property type="status" value="NOT_ANNOTATED_CDS"/>
    <property type="molecule type" value="Genomic_DNA"/>
</dbReference>
<dbReference type="EMBL" id="CR759815">
    <property type="status" value="NOT_ANNOTATED_CDS"/>
    <property type="molecule type" value="Genomic_DNA"/>
</dbReference>
<dbReference type="EMBL" id="CR938714">
    <property type="status" value="NOT_ANNOTATED_CDS"/>
    <property type="molecule type" value="Genomic_DNA"/>
</dbReference>
<dbReference type="EMBL" id="CH471081">
    <property type="protein sequence ID" value="EAX03357.1"/>
    <property type="molecule type" value="Genomic_DNA"/>
</dbReference>
<dbReference type="CCDS" id="CCDS34390.1">
    <molecule id="Q9UIG5-1"/>
</dbReference>
<dbReference type="RefSeq" id="NP_054787.2">
    <molecule id="Q9UIG5-1"/>
    <property type="nucleotide sequence ID" value="NM_014068.3"/>
</dbReference>
<dbReference type="BioGRID" id="128075">
    <property type="interactions" value="2"/>
</dbReference>
<dbReference type="IntAct" id="Q9UIG5">
    <property type="interactions" value="1"/>
</dbReference>
<dbReference type="STRING" id="9606.ENSP00000259881"/>
<dbReference type="iPTMnet" id="Q9UIG5"/>
<dbReference type="PhosphoSitePlus" id="Q9UIG5"/>
<dbReference type="BioMuta" id="PSORS1C1"/>
<dbReference type="PaxDb" id="9606-ENSP00000259881"/>
<dbReference type="Antibodypedia" id="53230">
    <property type="antibodies" value="86 antibodies from 13 providers"/>
</dbReference>
<dbReference type="DNASU" id="170679"/>
<dbReference type="Ensembl" id="ENST00000259881.10">
    <molecule id="Q9UIG5-1"/>
    <property type="protein sequence ID" value="ENSP00000259881.9"/>
    <property type="gene ID" value="ENSG00000204540.11"/>
</dbReference>
<dbReference type="Ensembl" id="ENST00000420214.6">
    <molecule id="Q9UIG5-1"/>
    <property type="protein sequence ID" value="ENSP00000396568.2"/>
    <property type="gene ID" value="ENSG00000233439.8"/>
</dbReference>
<dbReference type="Ensembl" id="ENST00000433334.6">
    <property type="protein sequence ID" value="ENSP00000391443.2"/>
    <property type="gene ID" value="ENSG00000233734.8"/>
</dbReference>
<dbReference type="Ensembl" id="ENST00000441092.6">
    <molecule id="Q9UIG5-1"/>
    <property type="protein sequence ID" value="ENSP00000398278.2"/>
    <property type="gene ID" value="ENSG00000231094.8"/>
</dbReference>
<dbReference type="Ensembl" id="ENST00000448455.6">
    <molecule id="Q9UIG5-1"/>
    <property type="protein sequence ID" value="ENSP00000389875.2"/>
    <property type="gene ID" value="ENSG00000235487.8"/>
</dbReference>
<dbReference type="GeneID" id="170679"/>
<dbReference type="KEGG" id="hsa:170679"/>
<dbReference type="MANE-Select" id="ENST00000259881.10">
    <property type="protein sequence ID" value="ENSP00000259881.9"/>
    <property type="RefSeq nucleotide sequence ID" value="NM_014068.3"/>
    <property type="RefSeq protein sequence ID" value="NP_054787.2"/>
</dbReference>
<dbReference type="UCSC" id="uc003nsl.2">
    <molecule id="Q9UIG5-1"/>
    <property type="organism name" value="human"/>
</dbReference>
<dbReference type="AGR" id="HGNC:17202"/>
<dbReference type="CTD" id="170679"/>
<dbReference type="DisGeNET" id="170679"/>
<dbReference type="GeneCards" id="PSORS1C1"/>
<dbReference type="HGNC" id="HGNC:17202">
    <property type="gene designation" value="PSORS1C1"/>
</dbReference>
<dbReference type="HPA" id="ENSG00000204540">
    <property type="expression patterns" value="Tissue enriched (testis)"/>
</dbReference>
<dbReference type="MalaCards" id="PSORS1C1"/>
<dbReference type="MIM" id="613525">
    <property type="type" value="gene"/>
</dbReference>
<dbReference type="neXtProt" id="NX_Q9UIG5"/>
<dbReference type="OpenTargets" id="ENSG00000204540"/>
<dbReference type="PharmGKB" id="PA33919"/>
<dbReference type="VEuPathDB" id="HostDB:ENSG00000204540"/>
<dbReference type="eggNOG" id="ENOG502TE6A">
    <property type="taxonomic scope" value="Eukaryota"/>
</dbReference>
<dbReference type="GeneTree" id="ENSGT00530000064866"/>
<dbReference type="HOGENOM" id="CLU_1721746_0_0_1"/>
<dbReference type="InParanoid" id="Q9UIG5"/>
<dbReference type="OMA" id="HINPDPF"/>
<dbReference type="OrthoDB" id="9485136at2759"/>
<dbReference type="PAN-GO" id="Q9UIG5">
    <property type="GO annotations" value="0 GO annotations based on evolutionary models"/>
</dbReference>
<dbReference type="PhylomeDB" id="Q9UIG5"/>
<dbReference type="TreeFam" id="TF341897"/>
<dbReference type="PathwayCommons" id="Q9UIG5"/>
<dbReference type="SignaLink" id="Q9UIG5"/>
<dbReference type="BioGRID-ORCS" id="170679">
    <property type="hits" value="7 hits in 1136 CRISPR screens"/>
</dbReference>
<dbReference type="ChiTaRS" id="PSORS1C1">
    <property type="organism name" value="human"/>
</dbReference>
<dbReference type="GenomeRNAi" id="170679"/>
<dbReference type="Pharos" id="Q9UIG5">
    <property type="development level" value="Tbio"/>
</dbReference>
<dbReference type="PRO" id="PR:Q9UIG5"/>
<dbReference type="Proteomes" id="UP000005640">
    <property type="component" value="Chromosome 6"/>
</dbReference>
<dbReference type="RNAct" id="Q9UIG5">
    <property type="molecule type" value="protein"/>
</dbReference>
<dbReference type="Bgee" id="ENSG00000204540">
    <property type="expression patterns" value="Expressed in left testis and 86 other cell types or tissues"/>
</dbReference>
<dbReference type="ExpressionAtlas" id="Q9UIG5">
    <property type="expression patterns" value="baseline and differential"/>
</dbReference>
<dbReference type="InterPro" id="IPR028206">
    <property type="entry name" value="SEEK1"/>
</dbReference>
<dbReference type="Pfam" id="PF15357">
    <property type="entry name" value="SEEK1"/>
    <property type="match status" value="1"/>
</dbReference>
<protein>
    <recommendedName>
        <fullName>Psoriasis susceptibility 1 candidate gene 1 protein</fullName>
    </recommendedName>
    <alternativeName>
        <fullName>Protein SEEK1</fullName>
    </alternativeName>
</protein>
<comment type="interaction">
    <interactant intactId="EBI-14831475">
        <id>Q9UIG5-2</id>
    </interactant>
    <interactant intactId="EBI-11978259">
        <id>Q92567-2</id>
        <label>FAM168A</label>
    </interactant>
    <organismsDiffer>false</organismsDiffer>
    <experiments>3</experiments>
</comment>
<comment type="alternative products">
    <event type="alternative splicing"/>
    <isoform>
        <id>Q9UIG5-1</id>
        <name>1</name>
        <sequence type="displayed"/>
    </isoform>
    <isoform>
        <id>Q9UIG5-2</id>
        <name>2</name>
        <sequence type="described" ref="VSP_009008"/>
    </isoform>
</comment>
<comment type="tissue specificity">
    <text evidence="3">Expressed in skin. Also found in heart, placenta, liver, skeletal muscle and pancreas.</text>
</comment>
<comment type="sequence caution" evidence="5">
    <conflict type="erroneous gene model prediction">
        <sequence resource="EMBL-CDS" id="BAB63314"/>
    </conflict>
</comment>
<comment type="sequence caution" evidence="5">
    <conflict type="erroneous gene model prediction">
        <sequence resource="EMBL-CDS" id="BAC54950"/>
    </conflict>
</comment>
<gene>
    <name type="primary">PSORS1C1</name>
    <name type="synonym">C6orf16</name>
    <name type="synonym">SEEK1</name>
</gene>
<feature type="chain" id="PRO_0000097057" description="Psoriasis susceptibility 1 candidate gene 1 protein">
    <location>
        <begin position="1"/>
        <end position="152"/>
    </location>
</feature>
<feature type="region of interest" description="Disordered" evidence="1">
    <location>
        <begin position="1"/>
        <end position="42"/>
    </location>
</feature>
<feature type="compositionally biased region" description="Polar residues" evidence="1">
    <location>
        <begin position="1"/>
        <end position="31"/>
    </location>
</feature>
<feature type="splice variant" id="VSP_009008" description="In isoform 2." evidence="4">
    <original>MTCTDQKSHSQRALGTQTPALQGPQLLNTDPSSEETRPPHVNPDRLCHMEPANHFW</original>
    <variation>MASRR</variation>
    <location>
        <begin position="1"/>
        <end position="56"/>
    </location>
</feature>
<feature type="sequence variant" id="VAR_017391" description="In dbSNP:rs1265097." evidence="3">
    <original>P</original>
    <variation>T</variation>
    <location>
        <position position="24"/>
    </location>
</feature>
<feature type="sequence variant" id="VAR_047088" description="In dbSNP:rs1265096." evidence="2 3">
    <original>E</original>
    <variation>K</variation>
    <location>
        <position position="34"/>
    </location>
</feature>
<feature type="sequence variant" id="VAR_017392" evidence="3">
    <original>E</original>
    <variation>Q</variation>
    <location>
        <position position="34"/>
    </location>
</feature>
<feature type="sequence variant" id="VAR_017393" description="In dbSNP:rs9263726." evidence="3">
    <original>R</original>
    <variation>H</variation>
    <location>
        <position position="37"/>
    </location>
</feature>
<feature type="sequence variant" id="VAR_047089" description="In dbSNP:rs9501057.">
    <original>P</original>
    <variation>S</variation>
    <location>
        <position position="43"/>
    </location>
</feature>
<feature type="sequence variant" id="VAR_047090" description="In dbSNP:rs2233943.">
    <original>S</original>
    <variation>C</variation>
    <location>
        <position position="66"/>
    </location>
</feature>
<feature type="sequence variant" id="VAR_017394" description="In dbSNP:rs1063646." evidence="3">
    <original>P</original>
    <variation>L</variation>
    <location>
        <position position="133"/>
    </location>
</feature>
<keyword id="KW-0025">Alternative splicing</keyword>
<keyword id="KW-1185">Reference proteome</keyword>
<name>PS1C1_HUMAN</name>
<proteinExistence type="evidence at protein level"/>
<organism>
    <name type="scientific">Homo sapiens</name>
    <name type="common">Human</name>
    <dbReference type="NCBI Taxonomy" id="9606"/>
    <lineage>
        <taxon>Eukaryota</taxon>
        <taxon>Metazoa</taxon>
        <taxon>Chordata</taxon>
        <taxon>Craniata</taxon>
        <taxon>Vertebrata</taxon>
        <taxon>Euteleostomi</taxon>
        <taxon>Mammalia</taxon>
        <taxon>Eutheria</taxon>
        <taxon>Euarchontoglires</taxon>
        <taxon>Primates</taxon>
        <taxon>Haplorrhini</taxon>
        <taxon>Catarrhini</taxon>
        <taxon>Hominidae</taxon>
        <taxon>Homo</taxon>
    </lineage>
</organism>